<organism>
    <name type="scientific">Callinectes sapidus</name>
    <name type="common">Blue crab</name>
    <dbReference type="NCBI Taxonomy" id="6763"/>
    <lineage>
        <taxon>Eukaryota</taxon>
        <taxon>Metazoa</taxon>
        <taxon>Ecdysozoa</taxon>
        <taxon>Arthropoda</taxon>
        <taxon>Crustacea</taxon>
        <taxon>Multicrustacea</taxon>
        <taxon>Malacostraca</taxon>
        <taxon>Eumalacostraca</taxon>
        <taxon>Eucarida</taxon>
        <taxon>Decapoda</taxon>
        <taxon>Pleocyemata</taxon>
        <taxon>Brachyura</taxon>
        <taxon>Eubrachyura</taxon>
        <taxon>Portunoidea</taxon>
        <taxon>Portunidae</taxon>
        <taxon>Portuninae</taxon>
        <taxon>Callinectes</taxon>
    </lineage>
</organism>
<feature type="peptide" id="PRO_0000043662" description="FMRFamide-like neuropeptide">
    <location>
        <begin position="1"/>
        <end position="9"/>
    </location>
</feature>
<feature type="modified residue" description="Phenylalanine amide" evidence="1">
    <location>
        <position position="9"/>
    </location>
</feature>
<sequence>GYNRSFLRF</sequence>
<accession>P38495</accession>
<reference key="1">
    <citation type="journal article" date="1991" name="Peptides">
        <title>The identification and structure-activity relations of a cardioactive FMRFamide-related peptide from the blue crab Callinectes sapidus.</title>
        <authorList>
            <person name="Krajniak K.G."/>
        </authorList>
    </citation>
    <scope>PROTEIN SEQUENCE</scope>
    <scope>AMIDATION AT PHE-9</scope>
</reference>
<dbReference type="GO" id="GO:0005576">
    <property type="term" value="C:extracellular region"/>
    <property type="evidence" value="ECO:0007669"/>
    <property type="project" value="UniProtKB-SubCell"/>
</dbReference>
<dbReference type="GO" id="GO:0007218">
    <property type="term" value="P:neuropeptide signaling pathway"/>
    <property type="evidence" value="ECO:0007669"/>
    <property type="project" value="UniProtKB-KW"/>
</dbReference>
<proteinExistence type="evidence at protein level"/>
<protein>
    <recommendedName>
        <fullName>FMRFamide-like neuropeptide</fullName>
    </recommendedName>
</protein>
<comment type="function">
    <text>Cardioactive peptide.</text>
</comment>
<comment type="subcellular location">
    <subcellularLocation>
        <location>Secreted</location>
    </subcellularLocation>
</comment>
<comment type="similarity">
    <text evidence="2">Belongs to the FARP (FMRFamide related peptide) family.</text>
</comment>
<name>FARP_CALSI</name>
<keyword id="KW-0027">Amidation</keyword>
<keyword id="KW-0903">Direct protein sequencing</keyword>
<keyword id="KW-0527">Neuropeptide</keyword>
<keyword id="KW-0964">Secreted</keyword>
<evidence type="ECO:0000269" key="1">
    <source>
    </source>
</evidence>
<evidence type="ECO:0000305" key="2"/>